<gene>
    <name evidence="1" type="primary">ubiD</name>
    <name type="ordered locus">Sbal195_3985</name>
</gene>
<reference key="1">
    <citation type="submission" date="2007-11" db="EMBL/GenBank/DDBJ databases">
        <title>Complete sequence of chromosome of Shewanella baltica OS195.</title>
        <authorList>
            <consortium name="US DOE Joint Genome Institute"/>
            <person name="Copeland A."/>
            <person name="Lucas S."/>
            <person name="Lapidus A."/>
            <person name="Barry K."/>
            <person name="Glavina del Rio T."/>
            <person name="Dalin E."/>
            <person name="Tice H."/>
            <person name="Pitluck S."/>
            <person name="Chain P."/>
            <person name="Malfatti S."/>
            <person name="Shin M."/>
            <person name="Vergez L."/>
            <person name="Schmutz J."/>
            <person name="Larimer F."/>
            <person name="Land M."/>
            <person name="Hauser L."/>
            <person name="Kyrpides N."/>
            <person name="Kim E."/>
            <person name="Brettar I."/>
            <person name="Rodrigues J."/>
            <person name="Konstantinidis K."/>
            <person name="Klappenbach J."/>
            <person name="Hofle M."/>
            <person name="Tiedje J."/>
            <person name="Richardson P."/>
        </authorList>
    </citation>
    <scope>NUCLEOTIDE SEQUENCE [LARGE SCALE GENOMIC DNA]</scope>
    <source>
        <strain>OS195</strain>
    </source>
</reference>
<keyword id="KW-1003">Cell membrane</keyword>
<keyword id="KW-0210">Decarboxylase</keyword>
<keyword id="KW-0285">Flavoprotein</keyword>
<keyword id="KW-0288">FMN</keyword>
<keyword id="KW-0456">Lyase</keyword>
<keyword id="KW-0464">Manganese</keyword>
<keyword id="KW-0472">Membrane</keyword>
<keyword id="KW-0479">Metal-binding</keyword>
<keyword id="KW-0831">Ubiquinone biosynthesis</keyword>
<organism>
    <name type="scientific">Shewanella baltica (strain OS195)</name>
    <dbReference type="NCBI Taxonomy" id="399599"/>
    <lineage>
        <taxon>Bacteria</taxon>
        <taxon>Pseudomonadati</taxon>
        <taxon>Pseudomonadota</taxon>
        <taxon>Gammaproteobacteria</taxon>
        <taxon>Alteromonadales</taxon>
        <taxon>Shewanellaceae</taxon>
        <taxon>Shewanella</taxon>
    </lineage>
</organism>
<evidence type="ECO:0000255" key="1">
    <source>
        <dbReference type="HAMAP-Rule" id="MF_01636"/>
    </source>
</evidence>
<comment type="function">
    <text evidence="1">Catalyzes the decarboxylation of 3-octaprenyl-4-hydroxy benzoate to 2-octaprenylphenol, an intermediate step in ubiquinone biosynthesis.</text>
</comment>
<comment type="catalytic activity">
    <reaction evidence="1">
        <text>a 4-hydroxy-3-(all-trans-polyprenyl)benzoate + H(+) = a 2-(all-trans-polyprenyl)phenol + CO2</text>
        <dbReference type="Rhea" id="RHEA:41680"/>
        <dbReference type="Rhea" id="RHEA-COMP:9514"/>
        <dbReference type="Rhea" id="RHEA-COMP:9516"/>
        <dbReference type="ChEBI" id="CHEBI:1269"/>
        <dbReference type="ChEBI" id="CHEBI:15378"/>
        <dbReference type="ChEBI" id="CHEBI:16526"/>
        <dbReference type="ChEBI" id="CHEBI:78396"/>
        <dbReference type="EC" id="4.1.1.98"/>
    </reaction>
</comment>
<comment type="cofactor">
    <cofactor evidence="1">
        <name>prenylated FMN</name>
        <dbReference type="ChEBI" id="CHEBI:87746"/>
    </cofactor>
    <text evidence="1">Binds 1 prenylated FMN per subunit.</text>
</comment>
<comment type="cofactor">
    <cofactor evidence="1">
        <name>Mn(2+)</name>
        <dbReference type="ChEBI" id="CHEBI:29035"/>
    </cofactor>
</comment>
<comment type="pathway">
    <text evidence="1">Cofactor biosynthesis; ubiquinone biosynthesis.</text>
</comment>
<comment type="subunit">
    <text evidence="1">Homohexamer.</text>
</comment>
<comment type="subcellular location">
    <subcellularLocation>
        <location evidence="1">Cell membrane</location>
        <topology evidence="1">Peripheral membrane protein</topology>
    </subcellularLocation>
</comment>
<comment type="similarity">
    <text evidence="1">Belongs to the UbiD family.</text>
</comment>
<dbReference type="EC" id="4.1.1.98" evidence="1"/>
<dbReference type="EMBL" id="CP000891">
    <property type="protein sequence ID" value="ABX51145.1"/>
    <property type="molecule type" value="Genomic_DNA"/>
</dbReference>
<dbReference type="RefSeq" id="WP_006079949.1">
    <property type="nucleotide sequence ID" value="NC_009997.1"/>
</dbReference>
<dbReference type="SMR" id="A9L4M9"/>
<dbReference type="GeneID" id="11773985"/>
<dbReference type="KEGG" id="sbn:Sbal195_3985"/>
<dbReference type="HOGENOM" id="CLU_023348_4_1_6"/>
<dbReference type="UniPathway" id="UPA00232"/>
<dbReference type="Proteomes" id="UP000000770">
    <property type="component" value="Chromosome"/>
</dbReference>
<dbReference type="GO" id="GO:0005829">
    <property type="term" value="C:cytosol"/>
    <property type="evidence" value="ECO:0007669"/>
    <property type="project" value="TreeGrafter"/>
</dbReference>
<dbReference type="GO" id="GO:0005886">
    <property type="term" value="C:plasma membrane"/>
    <property type="evidence" value="ECO:0007669"/>
    <property type="project" value="UniProtKB-SubCell"/>
</dbReference>
<dbReference type="GO" id="GO:0008694">
    <property type="term" value="F:3-octaprenyl-4-hydroxybenzoate carboxy-lyase activity"/>
    <property type="evidence" value="ECO:0007669"/>
    <property type="project" value="UniProtKB-UniRule"/>
</dbReference>
<dbReference type="GO" id="GO:0046872">
    <property type="term" value="F:metal ion binding"/>
    <property type="evidence" value="ECO:0007669"/>
    <property type="project" value="UniProtKB-KW"/>
</dbReference>
<dbReference type="GO" id="GO:0006744">
    <property type="term" value="P:ubiquinone biosynthetic process"/>
    <property type="evidence" value="ECO:0007669"/>
    <property type="project" value="UniProtKB-UniRule"/>
</dbReference>
<dbReference type="FunFam" id="1.20.5.570:FF:000001">
    <property type="entry name" value="3-octaprenyl-4-hydroxybenzoate carboxy-lyase"/>
    <property type="match status" value="1"/>
</dbReference>
<dbReference type="FunFam" id="3.40.1670.10:FF:000001">
    <property type="entry name" value="3-octaprenyl-4-hydroxybenzoate carboxy-lyase"/>
    <property type="match status" value="1"/>
</dbReference>
<dbReference type="Gene3D" id="1.20.5.570">
    <property type="entry name" value="Single helix bin"/>
    <property type="match status" value="1"/>
</dbReference>
<dbReference type="Gene3D" id="3.40.1670.10">
    <property type="entry name" value="UbiD C-terminal domain-like"/>
    <property type="match status" value="1"/>
</dbReference>
<dbReference type="HAMAP" id="MF_01636">
    <property type="entry name" value="UbiD"/>
    <property type="match status" value="1"/>
</dbReference>
<dbReference type="InterPro" id="IPR002830">
    <property type="entry name" value="UbiD"/>
</dbReference>
<dbReference type="InterPro" id="IPR049381">
    <property type="entry name" value="UbiD-like_C"/>
</dbReference>
<dbReference type="InterPro" id="IPR049383">
    <property type="entry name" value="UbiD-like_N"/>
</dbReference>
<dbReference type="InterPro" id="IPR023677">
    <property type="entry name" value="UbiD_bacteria"/>
</dbReference>
<dbReference type="InterPro" id="IPR048304">
    <property type="entry name" value="UbiD_Rift_dom"/>
</dbReference>
<dbReference type="NCBIfam" id="NF008175">
    <property type="entry name" value="PRK10922.1"/>
    <property type="match status" value="1"/>
</dbReference>
<dbReference type="NCBIfam" id="TIGR00148">
    <property type="entry name" value="UbiD family decarboxylase"/>
    <property type="match status" value="1"/>
</dbReference>
<dbReference type="PANTHER" id="PTHR30108">
    <property type="entry name" value="3-OCTAPRENYL-4-HYDROXYBENZOATE CARBOXY-LYASE-RELATED"/>
    <property type="match status" value="1"/>
</dbReference>
<dbReference type="PANTHER" id="PTHR30108:SF17">
    <property type="entry name" value="FERULIC ACID DECARBOXYLASE 1"/>
    <property type="match status" value="1"/>
</dbReference>
<dbReference type="Pfam" id="PF01977">
    <property type="entry name" value="UbiD"/>
    <property type="match status" value="1"/>
</dbReference>
<dbReference type="Pfam" id="PF20696">
    <property type="entry name" value="UbiD_C"/>
    <property type="match status" value="1"/>
</dbReference>
<dbReference type="Pfam" id="PF20695">
    <property type="entry name" value="UbiD_N"/>
    <property type="match status" value="1"/>
</dbReference>
<dbReference type="SUPFAM" id="SSF50475">
    <property type="entry name" value="FMN-binding split barrel"/>
    <property type="match status" value="1"/>
</dbReference>
<dbReference type="SUPFAM" id="SSF143968">
    <property type="entry name" value="UbiD C-terminal domain-like"/>
    <property type="match status" value="1"/>
</dbReference>
<proteinExistence type="inferred from homology"/>
<accession>A9L4M9</accession>
<sequence>MSFKDLRSFIDHLEANGELKRISYPVDPHLEMTEIADRVLRAKGPALLFENPKDHHMPVLVNLFGTPKRVAMALGKDDPLALREVGELLAFLKEPEPPRGFKDAIAKIPMFKQALNMPPKTVRNPPCQQVIKTGDEVDLTQLPIQHCWPGDVAPLVTWGLTITKGPRKSRQNLGIYRQQLLGKNKLIMRWLSHRGGALDFADFKQQFPGERYPVVVALGADPVTILGAVTPVPDSMSEYAFAGLLRGERTEVCKALSCDLEVPATSEIILEGYIDPEELAEEGPYGDHTGYYNETDKFPVFTVTHITHRKDAIYHSTYTGRPPDEPAMLGVALNEVFVPILRKQYPEIVDFYLPPEGCSYRMAVISIRKQYPGHAKRVMMGAWSFLRQFMYTKFIVIVDEDVNCRDWQDVIWAITTRMDPKRDTVMIENTPIDYLDFASPVAGLGSKMGLDATNKWEGETNREWGTPIVMDPKVKQKIDSIWDELGIDDSPTL</sequence>
<feature type="chain" id="PRO_1000088191" description="3-octaprenyl-4-hydroxybenzoate carboxy-lyase">
    <location>
        <begin position="1"/>
        <end position="493"/>
    </location>
</feature>
<feature type="active site" description="Proton donor" evidence="1">
    <location>
        <position position="287"/>
    </location>
</feature>
<feature type="binding site" evidence="1">
    <location>
        <position position="172"/>
    </location>
    <ligand>
        <name>Mn(2+)</name>
        <dbReference type="ChEBI" id="CHEBI:29035"/>
    </ligand>
</feature>
<feature type="binding site" evidence="1">
    <location>
        <begin position="175"/>
        <end position="177"/>
    </location>
    <ligand>
        <name>prenylated FMN</name>
        <dbReference type="ChEBI" id="CHEBI:87746"/>
    </ligand>
</feature>
<feature type="binding site" evidence="1">
    <location>
        <begin position="189"/>
        <end position="191"/>
    </location>
    <ligand>
        <name>prenylated FMN</name>
        <dbReference type="ChEBI" id="CHEBI:87746"/>
    </ligand>
</feature>
<feature type="binding site" evidence="1">
    <location>
        <begin position="194"/>
        <end position="195"/>
    </location>
    <ligand>
        <name>prenylated FMN</name>
        <dbReference type="ChEBI" id="CHEBI:87746"/>
    </ligand>
</feature>
<feature type="binding site" evidence="1">
    <location>
        <position position="238"/>
    </location>
    <ligand>
        <name>Mn(2+)</name>
        <dbReference type="ChEBI" id="CHEBI:29035"/>
    </ligand>
</feature>
<name>UBID_SHEB9</name>
<protein>
    <recommendedName>
        <fullName evidence="1">3-octaprenyl-4-hydroxybenzoate carboxy-lyase</fullName>
        <ecNumber evidence="1">4.1.1.98</ecNumber>
    </recommendedName>
    <alternativeName>
        <fullName evidence="1">Polyprenyl p-hydroxybenzoate decarboxylase</fullName>
    </alternativeName>
</protein>